<accession>Q9S7J8</accession>
<gene>
    <name type="primary">RAN1</name>
    <name type="synonym">HMA7</name>
    <name type="ordered locus">At5g44790</name>
    <name type="ORF">K23L20.14</name>
    <name type="ORF">T19K24.18</name>
</gene>
<feature type="chain" id="PRO_0000046402" description="Copper-transporting ATPase RAN1">
    <location>
        <begin position="1"/>
        <end position="1001"/>
    </location>
</feature>
<feature type="topological domain" description="Cytoplasmic" evidence="2">
    <location>
        <begin position="1"/>
        <end position="298"/>
    </location>
</feature>
<feature type="transmembrane region" description="Helical" evidence="2">
    <location>
        <begin position="299"/>
        <end position="320"/>
    </location>
</feature>
<feature type="topological domain" description="Extracellular" evidence="2">
    <location>
        <begin position="321"/>
        <end position="338"/>
    </location>
</feature>
<feature type="transmembrane region" description="Helical" evidence="2">
    <location>
        <begin position="339"/>
        <end position="358"/>
    </location>
</feature>
<feature type="topological domain" description="Cytoplasmic" evidence="2">
    <location>
        <begin position="359"/>
        <end position="365"/>
    </location>
</feature>
<feature type="transmembrane region" description="Helical" evidence="2">
    <location>
        <begin position="366"/>
        <end position="386"/>
    </location>
</feature>
<feature type="topological domain" description="Extracellular" evidence="2">
    <location>
        <begin position="387"/>
        <end position="403"/>
    </location>
</feature>
<feature type="transmembrane region" description="Helical" evidence="2">
    <location>
        <begin position="404"/>
        <end position="424"/>
    </location>
</feature>
<feature type="topological domain" description="Cytoplasmic" evidence="2">
    <location>
        <begin position="425"/>
        <end position="558"/>
    </location>
</feature>
<feature type="transmembrane region" description="Helical" evidence="2">
    <location>
        <begin position="559"/>
        <end position="581"/>
    </location>
</feature>
<feature type="topological domain" description="Extracellular" evidence="2">
    <location>
        <begin position="582"/>
        <end position="602"/>
    </location>
</feature>
<feature type="transmembrane region" description="Helical" evidence="2">
    <location>
        <begin position="603"/>
        <end position="620"/>
    </location>
</feature>
<feature type="topological domain" description="Cytoplasmic" evidence="2">
    <location>
        <begin position="621"/>
        <end position="931"/>
    </location>
</feature>
<feature type="transmembrane region" description="Helical" evidence="2">
    <location>
        <begin position="932"/>
        <end position="951"/>
    </location>
</feature>
<feature type="topological domain" description="Extracellular" evidence="2">
    <location>
        <begin position="952"/>
        <end position="963"/>
    </location>
</feature>
<feature type="transmembrane region" description="Helical" evidence="2">
    <location>
        <begin position="964"/>
        <end position="982"/>
    </location>
</feature>
<feature type="topological domain" description="Cytoplasmic" evidence="2">
    <location>
        <begin position="983"/>
        <end position="1001"/>
    </location>
</feature>
<feature type="domain" description="HMA 1" evidence="3">
    <location>
        <begin position="56"/>
        <end position="122"/>
    </location>
</feature>
<feature type="domain" description="HMA 2" evidence="3">
    <location>
        <begin position="133"/>
        <end position="199"/>
    </location>
</feature>
<feature type="domain" description="HMA 3; degenerate" evidence="3">
    <location>
        <begin position="207"/>
        <end position="273"/>
    </location>
</feature>
<feature type="region of interest" description="Disordered" evidence="4">
    <location>
        <begin position="1"/>
        <end position="21"/>
    </location>
</feature>
<feature type="compositionally biased region" description="Polar residues" evidence="4">
    <location>
        <begin position="11"/>
        <end position="21"/>
    </location>
</feature>
<feature type="active site" description="4-aspartylphosphate intermediate" evidence="1">
    <location>
        <position position="658"/>
    </location>
</feature>
<feature type="binding site" evidence="3">
    <location>
        <position position="67"/>
    </location>
    <ligand>
        <name>Cu(+)</name>
        <dbReference type="ChEBI" id="CHEBI:49552"/>
        <label>1</label>
    </ligand>
</feature>
<feature type="binding site" evidence="3">
    <location>
        <position position="70"/>
    </location>
    <ligand>
        <name>Cu(+)</name>
        <dbReference type="ChEBI" id="CHEBI:49552"/>
        <label>1</label>
    </ligand>
</feature>
<feature type="binding site" evidence="3">
    <location>
        <position position="144"/>
    </location>
    <ligand>
        <name>Cu(+)</name>
        <dbReference type="ChEBI" id="CHEBI:49552"/>
        <label>2</label>
    </ligand>
</feature>
<feature type="binding site" evidence="3">
    <location>
        <position position="147"/>
    </location>
    <ligand>
        <name>Cu(+)</name>
        <dbReference type="ChEBI" id="CHEBI:49552"/>
        <label>2</label>
    </ligand>
</feature>
<feature type="binding site">
    <location>
        <position position="877"/>
    </location>
    <ligand>
        <name>Mg(2+)</name>
        <dbReference type="ChEBI" id="CHEBI:18420"/>
    </ligand>
</feature>
<feature type="binding site">
    <location>
        <position position="881"/>
    </location>
    <ligand>
        <name>Mg(2+)</name>
        <dbReference type="ChEBI" id="CHEBI:18420"/>
    </ligand>
</feature>
<feature type="mutagenesis site" description="In ran1-2." evidence="5">
    <original>G</original>
    <variation>E</variation>
    <location>
        <position position="173"/>
    </location>
</feature>
<feature type="mutagenesis site" description="In ran1-1." evidence="5">
    <original>T</original>
    <variation>I</variation>
    <location>
        <position position="497"/>
    </location>
</feature>
<feature type="strand" evidence="7">
    <location>
        <begin position="56"/>
        <end position="63"/>
    </location>
</feature>
<feature type="helix" evidence="7">
    <location>
        <begin position="68"/>
        <end position="79"/>
    </location>
</feature>
<feature type="strand" evidence="7">
    <location>
        <begin position="84"/>
        <end position="90"/>
    </location>
</feature>
<feature type="helix" evidence="7">
    <location>
        <begin position="91"/>
        <end position="93"/>
    </location>
</feature>
<feature type="strand" evidence="7">
    <location>
        <begin position="95"/>
        <end position="100"/>
    </location>
</feature>
<feature type="turn" evidence="7">
    <location>
        <begin position="102"/>
        <end position="104"/>
    </location>
</feature>
<feature type="helix" evidence="7">
    <location>
        <begin position="107"/>
        <end position="117"/>
    </location>
</feature>
<feature type="strand" evidence="7">
    <location>
        <begin position="120"/>
        <end position="126"/>
    </location>
</feature>
<dbReference type="EC" id="7.2.2.8"/>
<dbReference type="EMBL" id="AF091112">
    <property type="protein sequence ID" value="AAD29115.1"/>
    <property type="molecule type" value="Genomic_DNA"/>
</dbReference>
<dbReference type="EMBL" id="AF082565">
    <property type="protein sequence ID" value="AAD29109.1"/>
    <property type="molecule type" value="mRNA"/>
</dbReference>
<dbReference type="EMBL" id="AB016874">
    <property type="protein sequence ID" value="BAB08832.1"/>
    <property type="molecule type" value="Genomic_DNA"/>
</dbReference>
<dbReference type="EMBL" id="AC002342">
    <property type="protein sequence ID" value="AAC79141.2"/>
    <property type="molecule type" value="Genomic_DNA"/>
</dbReference>
<dbReference type="EMBL" id="CP002688">
    <property type="protein sequence ID" value="AED95163.1"/>
    <property type="molecule type" value="Genomic_DNA"/>
</dbReference>
<dbReference type="RefSeq" id="NP_199292.1">
    <property type="nucleotide sequence ID" value="NM_123847.3"/>
</dbReference>
<dbReference type="PDB" id="3DXS">
    <property type="method" value="X-ray"/>
    <property type="resolution" value="1.70 A"/>
    <property type="chains" value="X=56-128"/>
</dbReference>
<dbReference type="PDB" id="8RNZ">
    <property type="method" value="X-ray"/>
    <property type="resolution" value="1.98 A"/>
    <property type="chains" value="A/B=205-281"/>
</dbReference>
<dbReference type="PDBsum" id="3DXS"/>
<dbReference type="PDBsum" id="8RNZ"/>
<dbReference type="SMR" id="Q9S7J8"/>
<dbReference type="BioGRID" id="19759">
    <property type="interactions" value="3"/>
</dbReference>
<dbReference type="FunCoup" id="Q9S7J8">
    <property type="interactions" value="2992"/>
</dbReference>
<dbReference type="IntAct" id="Q9S7J8">
    <property type="interactions" value="2"/>
</dbReference>
<dbReference type="STRING" id="3702.Q9S7J8"/>
<dbReference type="TCDB" id="3.A.3.5.32">
    <property type="family name" value="the p-type atpase (p-atpase) superfamily"/>
</dbReference>
<dbReference type="SwissPalm" id="Q9S7J8"/>
<dbReference type="PaxDb" id="3702-AT5G44790.1"/>
<dbReference type="ProteomicsDB" id="232096"/>
<dbReference type="EnsemblPlants" id="AT5G44790.1">
    <property type="protein sequence ID" value="AT5G44790.1"/>
    <property type="gene ID" value="AT5G44790"/>
</dbReference>
<dbReference type="GeneID" id="834509"/>
<dbReference type="Gramene" id="AT5G44790.1">
    <property type="protein sequence ID" value="AT5G44790.1"/>
    <property type="gene ID" value="AT5G44790"/>
</dbReference>
<dbReference type="KEGG" id="ath:AT5G44790"/>
<dbReference type="Araport" id="AT5G44790"/>
<dbReference type="TAIR" id="AT5G44790">
    <property type="gene designation" value="RAN1"/>
</dbReference>
<dbReference type="eggNOG" id="KOG0207">
    <property type="taxonomic scope" value="Eukaryota"/>
</dbReference>
<dbReference type="HOGENOM" id="CLU_001771_0_3_1"/>
<dbReference type="InParanoid" id="Q9S7J8"/>
<dbReference type="OMA" id="HWMLPAW"/>
<dbReference type="PhylomeDB" id="Q9S7J8"/>
<dbReference type="BioCyc" id="ARA:AT5G44790-MONOMER"/>
<dbReference type="EvolutionaryTrace" id="Q9S7J8"/>
<dbReference type="PRO" id="PR:Q9S7J8"/>
<dbReference type="Proteomes" id="UP000006548">
    <property type="component" value="Chromosome 5"/>
</dbReference>
<dbReference type="ExpressionAtlas" id="Q9S7J8">
    <property type="expression patterns" value="baseline and differential"/>
</dbReference>
<dbReference type="GO" id="GO:0005768">
    <property type="term" value="C:endosome"/>
    <property type="evidence" value="ECO:0007005"/>
    <property type="project" value="TAIR"/>
</dbReference>
<dbReference type="GO" id="GO:0005794">
    <property type="term" value="C:Golgi apparatus"/>
    <property type="evidence" value="ECO:0007005"/>
    <property type="project" value="TAIR"/>
</dbReference>
<dbReference type="GO" id="GO:0016020">
    <property type="term" value="C:membrane"/>
    <property type="evidence" value="ECO:0007669"/>
    <property type="project" value="UniProtKB-SubCell"/>
</dbReference>
<dbReference type="GO" id="GO:0005802">
    <property type="term" value="C:trans-Golgi network"/>
    <property type="evidence" value="ECO:0007005"/>
    <property type="project" value="TAIR"/>
</dbReference>
<dbReference type="GO" id="GO:0005524">
    <property type="term" value="F:ATP binding"/>
    <property type="evidence" value="ECO:0007669"/>
    <property type="project" value="UniProtKB-KW"/>
</dbReference>
<dbReference type="GO" id="GO:0016887">
    <property type="term" value="F:ATP hydrolysis activity"/>
    <property type="evidence" value="ECO:0007669"/>
    <property type="project" value="InterPro"/>
</dbReference>
<dbReference type="GO" id="GO:0005507">
    <property type="term" value="F:copper ion binding"/>
    <property type="evidence" value="ECO:0007669"/>
    <property type="project" value="InterPro"/>
</dbReference>
<dbReference type="GO" id="GO:0140581">
    <property type="term" value="F:P-type monovalent copper transporter activity"/>
    <property type="evidence" value="ECO:0007669"/>
    <property type="project" value="UniProtKB-EC"/>
</dbReference>
<dbReference type="GO" id="GO:0009873">
    <property type="term" value="P:ethylene-activated signaling pathway"/>
    <property type="evidence" value="ECO:0000304"/>
    <property type="project" value="TAIR"/>
</dbReference>
<dbReference type="GO" id="GO:0010119">
    <property type="term" value="P:regulation of stomatal movement"/>
    <property type="evidence" value="ECO:0000315"/>
    <property type="project" value="TAIR"/>
</dbReference>
<dbReference type="GO" id="GO:0009723">
    <property type="term" value="P:response to ethylene"/>
    <property type="evidence" value="ECO:0000315"/>
    <property type="project" value="TAIR"/>
</dbReference>
<dbReference type="CDD" id="cd00371">
    <property type="entry name" value="HMA"/>
    <property type="match status" value="2"/>
</dbReference>
<dbReference type="CDD" id="cd02094">
    <property type="entry name" value="P-type_ATPase_Cu-like"/>
    <property type="match status" value="1"/>
</dbReference>
<dbReference type="FunFam" id="3.40.1110.10:FF:000038">
    <property type="entry name" value="Copper-exporting P-type ATPase"/>
    <property type="match status" value="1"/>
</dbReference>
<dbReference type="FunFam" id="3.30.70.100:FF:000005">
    <property type="entry name" value="Copper-exporting P-type ATPase A"/>
    <property type="match status" value="2"/>
</dbReference>
<dbReference type="FunFam" id="2.70.150.10:FF:000002">
    <property type="entry name" value="Copper-transporting ATPase 1, putative"/>
    <property type="match status" value="1"/>
</dbReference>
<dbReference type="FunFam" id="3.40.1110.10:FF:000065">
    <property type="entry name" value="Copper-transporting ATPase RAN1"/>
    <property type="match status" value="1"/>
</dbReference>
<dbReference type="FunFam" id="3.40.50.1000:FF:000031">
    <property type="entry name" value="Probable copper-transporting ATPase HMA5"/>
    <property type="match status" value="1"/>
</dbReference>
<dbReference type="Gene3D" id="3.30.70.100">
    <property type="match status" value="3"/>
</dbReference>
<dbReference type="Gene3D" id="3.40.1110.10">
    <property type="entry name" value="Calcium-transporting ATPase, cytoplasmic domain N"/>
    <property type="match status" value="2"/>
</dbReference>
<dbReference type="Gene3D" id="2.70.150.10">
    <property type="entry name" value="Calcium-transporting ATPase, cytoplasmic transduction domain A"/>
    <property type="match status" value="1"/>
</dbReference>
<dbReference type="Gene3D" id="3.40.50.1000">
    <property type="entry name" value="HAD superfamily/HAD-like"/>
    <property type="match status" value="1"/>
</dbReference>
<dbReference type="InterPro" id="IPR023299">
    <property type="entry name" value="ATPase_P-typ_cyto_dom_N"/>
</dbReference>
<dbReference type="InterPro" id="IPR018303">
    <property type="entry name" value="ATPase_P-typ_P_site"/>
</dbReference>
<dbReference type="InterPro" id="IPR023298">
    <property type="entry name" value="ATPase_P-typ_TM_dom_sf"/>
</dbReference>
<dbReference type="InterPro" id="IPR008250">
    <property type="entry name" value="ATPase_P-typ_transduc_dom_A_sf"/>
</dbReference>
<dbReference type="InterPro" id="IPR036412">
    <property type="entry name" value="HAD-like_sf"/>
</dbReference>
<dbReference type="InterPro" id="IPR023214">
    <property type="entry name" value="HAD_sf"/>
</dbReference>
<dbReference type="InterPro" id="IPR017969">
    <property type="entry name" value="Heavy-metal-associated_CS"/>
</dbReference>
<dbReference type="InterPro" id="IPR006122">
    <property type="entry name" value="HMA_Cu_ion-bd"/>
</dbReference>
<dbReference type="InterPro" id="IPR006121">
    <property type="entry name" value="HMA_dom"/>
</dbReference>
<dbReference type="InterPro" id="IPR036163">
    <property type="entry name" value="HMA_dom_sf"/>
</dbReference>
<dbReference type="InterPro" id="IPR027256">
    <property type="entry name" value="P-typ_ATPase_IB"/>
</dbReference>
<dbReference type="InterPro" id="IPR001757">
    <property type="entry name" value="P_typ_ATPase"/>
</dbReference>
<dbReference type="InterPro" id="IPR044492">
    <property type="entry name" value="P_typ_ATPase_HD_dom"/>
</dbReference>
<dbReference type="NCBIfam" id="TIGR01525">
    <property type="entry name" value="ATPase-IB_hvy"/>
    <property type="match status" value="1"/>
</dbReference>
<dbReference type="NCBIfam" id="TIGR01494">
    <property type="entry name" value="ATPase_P-type"/>
    <property type="match status" value="2"/>
</dbReference>
<dbReference type="NCBIfam" id="TIGR00003">
    <property type="entry name" value="copper ion binding protein"/>
    <property type="match status" value="2"/>
</dbReference>
<dbReference type="PANTHER" id="PTHR46594:SF6">
    <property type="entry name" value="COPPER-TRANSPORTING ATPASE RAN1"/>
    <property type="match status" value="1"/>
</dbReference>
<dbReference type="PANTHER" id="PTHR46594">
    <property type="entry name" value="P-TYPE CATION-TRANSPORTING ATPASE"/>
    <property type="match status" value="1"/>
</dbReference>
<dbReference type="Pfam" id="PF00122">
    <property type="entry name" value="E1-E2_ATPase"/>
    <property type="match status" value="1"/>
</dbReference>
<dbReference type="Pfam" id="PF00403">
    <property type="entry name" value="HMA"/>
    <property type="match status" value="2"/>
</dbReference>
<dbReference type="Pfam" id="PF00702">
    <property type="entry name" value="Hydrolase"/>
    <property type="match status" value="1"/>
</dbReference>
<dbReference type="PRINTS" id="PR00119">
    <property type="entry name" value="CATATPASE"/>
</dbReference>
<dbReference type="PRINTS" id="PR00942">
    <property type="entry name" value="CUATPASEI"/>
</dbReference>
<dbReference type="SFLD" id="SFLDS00003">
    <property type="entry name" value="Haloacid_Dehalogenase"/>
    <property type="match status" value="1"/>
</dbReference>
<dbReference type="SFLD" id="SFLDF00027">
    <property type="entry name" value="p-type_atpase"/>
    <property type="match status" value="1"/>
</dbReference>
<dbReference type="SUPFAM" id="SSF81653">
    <property type="entry name" value="Calcium ATPase, transduction domain A"/>
    <property type="match status" value="1"/>
</dbReference>
<dbReference type="SUPFAM" id="SSF81665">
    <property type="entry name" value="Calcium ATPase, transmembrane domain M"/>
    <property type="match status" value="1"/>
</dbReference>
<dbReference type="SUPFAM" id="SSF56784">
    <property type="entry name" value="HAD-like"/>
    <property type="match status" value="1"/>
</dbReference>
<dbReference type="SUPFAM" id="SSF55008">
    <property type="entry name" value="HMA, heavy metal-associated domain"/>
    <property type="match status" value="3"/>
</dbReference>
<dbReference type="PROSITE" id="PS00154">
    <property type="entry name" value="ATPASE_E1_E2"/>
    <property type="match status" value="1"/>
</dbReference>
<dbReference type="PROSITE" id="PS01047">
    <property type="entry name" value="HMA_1"/>
    <property type="match status" value="2"/>
</dbReference>
<dbReference type="PROSITE" id="PS50846">
    <property type="entry name" value="HMA_2"/>
    <property type="match status" value="3"/>
</dbReference>
<comment type="function">
    <text>Involved in copper import into the cell. Essential for ethylene signaling, which requires copper. Acts by delivering copper to create functional hormone receptors.</text>
</comment>
<comment type="catalytic activity">
    <reaction>
        <text>Cu(+)(in) + ATP + H2O = Cu(+)(out) + ADP + phosphate + H(+)</text>
        <dbReference type="Rhea" id="RHEA:25792"/>
        <dbReference type="ChEBI" id="CHEBI:15377"/>
        <dbReference type="ChEBI" id="CHEBI:15378"/>
        <dbReference type="ChEBI" id="CHEBI:30616"/>
        <dbReference type="ChEBI" id="CHEBI:43474"/>
        <dbReference type="ChEBI" id="CHEBI:49552"/>
        <dbReference type="ChEBI" id="CHEBI:456216"/>
        <dbReference type="EC" id="7.2.2.8"/>
    </reaction>
</comment>
<comment type="subcellular location">
    <subcellularLocation>
        <location>Membrane</location>
        <topology>Multi-pass membrane protein</topology>
    </subcellularLocation>
</comment>
<comment type="similarity">
    <text evidence="6">Belongs to the cation transport ATPase (P-type) (TC 3.A.3) family. Type IB subfamily.</text>
</comment>
<evidence type="ECO:0000250" key="1"/>
<evidence type="ECO:0000255" key="2"/>
<evidence type="ECO:0000255" key="3">
    <source>
        <dbReference type="PROSITE-ProRule" id="PRU00280"/>
    </source>
</evidence>
<evidence type="ECO:0000256" key="4">
    <source>
        <dbReference type="SAM" id="MobiDB-lite"/>
    </source>
</evidence>
<evidence type="ECO:0000269" key="5">
    <source>
    </source>
</evidence>
<evidence type="ECO:0000305" key="6"/>
<evidence type="ECO:0007829" key="7">
    <source>
        <dbReference type="PDB" id="3DXS"/>
    </source>
</evidence>
<protein>
    <recommendedName>
        <fullName>Copper-transporting ATPase RAN1</fullName>
        <ecNumber>7.2.2.8</ecNumber>
    </recommendedName>
    <alternativeName>
        <fullName>Protein HEAVY METAL ATPASE 7</fullName>
    </alternativeName>
    <alternativeName>
        <fullName>Protein RESPONSIVE TO ANTAGONIST 1</fullName>
    </alternativeName>
</protein>
<reference key="1">
    <citation type="journal article" date="1999" name="Cell">
        <title>Responsive-to-antagonist 1, a Menkes/Wilson disease-related copper transporter, is required for ethylene signaling in Arabidopsis.</title>
        <authorList>
            <person name="Hirayama T."/>
            <person name="Kieber J.J."/>
            <person name="Hirayama N."/>
            <person name="Kogan M."/>
            <person name="Guzman P."/>
            <person name="Nourizadeh S."/>
            <person name="Alonso J.M."/>
            <person name="Dailey W.P."/>
            <person name="Dancis A."/>
            <person name="Ecker J.R."/>
        </authorList>
    </citation>
    <scope>NUCLEOTIDE SEQUENCE [GENOMIC DNA / MRNA]</scope>
    <scope>MUTAGENESIS</scope>
    <source>
        <strain>cv. Columbia</strain>
    </source>
</reference>
<reference key="2">
    <citation type="journal article" date="1998" name="DNA Res.">
        <title>Structural analysis of Arabidopsis thaliana chromosome 5. VIII. Sequence features of the regions of 1,081,958 bp covered by seventeen physically assigned P1 and TAC clones.</title>
        <authorList>
            <person name="Asamizu E."/>
            <person name="Sato S."/>
            <person name="Kaneko T."/>
            <person name="Nakamura Y."/>
            <person name="Kotani H."/>
            <person name="Miyajima N."/>
            <person name="Tabata S."/>
        </authorList>
    </citation>
    <scope>NUCLEOTIDE SEQUENCE [LARGE SCALE GENOMIC DNA]</scope>
    <source>
        <strain>cv. Columbia</strain>
    </source>
</reference>
<reference key="3">
    <citation type="journal article" date="2000" name="Nature">
        <title>Sequence and analysis of chromosome 5 of the plant Arabidopsis thaliana.</title>
        <authorList>
            <person name="Tabata S."/>
            <person name="Kaneko T."/>
            <person name="Nakamura Y."/>
            <person name="Kotani H."/>
            <person name="Kato T."/>
            <person name="Asamizu E."/>
            <person name="Miyajima N."/>
            <person name="Sasamoto S."/>
            <person name="Kimura T."/>
            <person name="Hosouchi T."/>
            <person name="Kawashima K."/>
            <person name="Kohara M."/>
            <person name="Matsumoto M."/>
            <person name="Matsuno A."/>
            <person name="Muraki A."/>
            <person name="Nakayama S."/>
            <person name="Nakazaki N."/>
            <person name="Naruo K."/>
            <person name="Okumura S."/>
            <person name="Shinpo S."/>
            <person name="Takeuchi C."/>
            <person name="Wada T."/>
            <person name="Watanabe A."/>
            <person name="Yamada M."/>
            <person name="Yasuda M."/>
            <person name="Sato S."/>
            <person name="de la Bastide M."/>
            <person name="Huang E."/>
            <person name="Spiegel L."/>
            <person name="Gnoj L."/>
            <person name="O'Shaughnessy A."/>
            <person name="Preston R."/>
            <person name="Habermann K."/>
            <person name="Murray J."/>
            <person name="Johnson D."/>
            <person name="Rohlfing T."/>
            <person name="Nelson J."/>
            <person name="Stoneking T."/>
            <person name="Pepin K."/>
            <person name="Spieth J."/>
            <person name="Sekhon M."/>
            <person name="Armstrong J."/>
            <person name="Becker M."/>
            <person name="Belter E."/>
            <person name="Cordum H."/>
            <person name="Cordes M."/>
            <person name="Courtney L."/>
            <person name="Courtney W."/>
            <person name="Dante M."/>
            <person name="Du H."/>
            <person name="Edwards J."/>
            <person name="Fryman J."/>
            <person name="Haakensen B."/>
            <person name="Lamar E."/>
            <person name="Latreille P."/>
            <person name="Leonard S."/>
            <person name="Meyer R."/>
            <person name="Mulvaney E."/>
            <person name="Ozersky P."/>
            <person name="Riley A."/>
            <person name="Strowmatt C."/>
            <person name="Wagner-McPherson C."/>
            <person name="Wollam A."/>
            <person name="Yoakum M."/>
            <person name="Bell M."/>
            <person name="Dedhia N."/>
            <person name="Parnell L."/>
            <person name="Shah R."/>
            <person name="Rodriguez M."/>
            <person name="Hoon See L."/>
            <person name="Vil D."/>
            <person name="Baker J."/>
            <person name="Kirchoff K."/>
            <person name="Toth K."/>
            <person name="King L."/>
            <person name="Bahret A."/>
            <person name="Miller B."/>
            <person name="Marra M.A."/>
            <person name="Martienssen R."/>
            <person name="McCombie W.R."/>
            <person name="Wilson R.K."/>
            <person name="Murphy G."/>
            <person name="Bancroft I."/>
            <person name="Volckaert G."/>
            <person name="Wambutt R."/>
            <person name="Duesterhoeft A."/>
            <person name="Stiekema W."/>
            <person name="Pohl T."/>
            <person name="Entian K.-D."/>
            <person name="Terryn N."/>
            <person name="Hartley N."/>
            <person name="Bent E."/>
            <person name="Johnson S."/>
            <person name="Langham S.-A."/>
            <person name="McCullagh B."/>
            <person name="Robben J."/>
            <person name="Grymonprez B."/>
            <person name="Zimmermann W."/>
            <person name="Ramsperger U."/>
            <person name="Wedler H."/>
            <person name="Balke K."/>
            <person name="Wedler E."/>
            <person name="Peters S."/>
            <person name="van Staveren M."/>
            <person name="Dirkse W."/>
            <person name="Mooijman P."/>
            <person name="Klein Lankhorst R."/>
            <person name="Weitzenegger T."/>
            <person name="Bothe G."/>
            <person name="Rose M."/>
            <person name="Hauf J."/>
            <person name="Berneiser S."/>
            <person name="Hempel S."/>
            <person name="Feldpausch M."/>
            <person name="Lamberth S."/>
            <person name="Villarroel R."/>
            <person name="Gielen J."/>
            <person name="Ardiles W."/>
            <person name="Bents O."/>
            <person name="Lemcke K."/>
            <person name="Kolesov G."/>
            <person name="Mayer K.F.X."/>
            <person name="Rudd S."/>
            <person name="Schoof H."/>
            <person name="Schueller C."/>
            <person name="Zaccaria P."/>
            <person name="Mewes H.-W."/>
            <person name="Bevan M."/>
            <person name="Fransz P.F."/>
        </authorList>
    </citation>
    <scope>NUCLEOTIDE SEQUENCE [LARGE SCALE GENOMIC DNA]</scope>
    <source>
        <strain>cv. Columbia</strain>
    </source>
</reference>
<reference key="4">
    <citation type="journal article" date="2017" name="Plant J.">
        <title>Araport11: a complete reannotation of the Arabidopsis thaliana reference genome.</title>
        <authorList>
            <person name="Cheng C.Y."/>
            <person name="Krishnakumar V."/>
            <person name="Chan A.P."/>
            <person name="Thibaud-Nissen F."/>
            <person name="Schobel S."/>
            <person name="Town C.D."/>
        </authorList>
    </citation>
    <scope>GENOME REANNOTATION</scope>
    <source>
        <strain>cv. Columbia</strain>
    </source>
</reference>
<name>HMA7_ARATH</name>
<sequence length="1001" mass="107395">MAPSRRDLQLTPVTGGSSSQISDMEEVGLLDSYHNEANADDILTKIEEGRDVSGLRKIQVGVTGMTCAACSNSVEAALMNVNGVFKASVALLQNRADVVFDPNLVKEEDIKEAIEDAGFEAEILAEEQTQATLVGQFTIGGMTCAACVNSVEGILRDLPGVKRAVVALSTSLGEVEYDPNVINKDDIVNAIEDAGFEGSLVQSNQQDKLVLRVDGILNELDAQVLEGILTRLNGVRQFRLDRISGELEVVFDPEVVSSRSLVDGIEEDGFGKFKLRVMSPYERLSSKDTGEASNMFRRFISSLVLSIPLFFIQVICPHIALFDALLVWRCGPFMMGDWLKWALVSVIQFVIGKRFYVAAWRALRNGSTNMDVLVALGTSASYFYSVGALLYGAVTGFWSPTYFDASAMLITFVLLGKYLESLAKGKTSDAMKKLVQLTPATAILLTEGKGGKLVGEREIDALLIQPGDTLKVHPGAKIPADGVVVWGSSYVNESMVTGESVPVSKEVDSPVIGGTINMHGALHMKATKVGSDAVLSQIISLVETAQMSKAPIQKFADYVASIFVPVVITLALFTLVGWSIGGAVGAYPDEWLPENGTHFVFSLMFSISVVVIACPCALGLATPTAVMVATGVGATNGVLIKGGDALEKAHKVKYVIFDKTGTLTQGKATVTTTKVFSEMDRGEFLTLVASAEASSEHPLAKAIVAYARHFHFFDESTEDGETNNKDLQNSGWLLDTSDFSALPGKGIQCLVNEKMILVGNRKLMSENAINIPDHVEKFVEDLEESGKTGVIVAYNGKLVGVMGIADPLKREAALVVEGLLRMGVRPIMVTGDNWRTARAVAKEVGIEDVRAEVMPAGKADVIRSLQKDGSTVAMVGDGINDSPALAAADVGMAIGAGTDVAIEAADYVLMRNNLEDVITAIDLSRKTLTRIRLNYVFAMAYNVVSIPIAAGVFFPVLRVQLPPWAAGACMALSSVSVVCSSLLLRRYKKPRLTTVLKITTE</sequence>
<keyword id="KW-0002">3D-structure</keyword>
<keyword id="KW-0067">ATP-binding</keyword>
<keyword id="KW-0186">Copper</keyword>
<keyword id="KW-0187">Copper transport</keyword>
<keyword id="KW-0936">Ethylene signaling pathway</keyword>
<keyword id="KW-0406">Ion transport</keyword>
<keyword id="KW-0460">Magnesium</keyword>
<keyword id="KW-0472">Membrane</keyword>
<keyword id="KW-0479">Metal-binding</keyword>
<keyword id="KW-0547">Nucleotide-binding</keyword>
<keyword id="KW-1185">Reference proteome</keyword>
<keyword id="KW-0677">Repeat</keyword>
<keyword id="KW-1278">Translocase</keyword>
<keyword id="KW-0812">Transmembrane</keyword>
<keyword id="KW-1133">Transmembrane helix</keyword>
<keyword id="KW-0813">Transport</keyword>
<organism>
    <name type="scientific">Arabidopsis thaliana</name>
    <name type="common">Mouse-ear cress</name>
    <dbReference type="NCBI Taxonomy" id="3702"/>
    <lineage>
        <taxon>Eukaryota</taxon>
        <taxon>Viridiplantae</taxon>
        <taxon>Streptophyta</taxon>
        <taxon>Embryophyta</taxon>
        <taxon>Tracheophyta</taxon>
        <taxon>Spermatophyta</taxon>
        <taxon>Magnoliopsida</taxon>
        <taxon>eudicotyledons</taxon>
        <taxon>Gunneridae</taxon>
        <taxon>Pentapetalae</taxon>
        <taxon>rosids</taxon>
        <taxon>malvids</taxon>
        <taxon>Brassicales</taxon>
        <taxon>Brassicaceae</taxon>
        <taxon>Camelineae</taxon>
        <taxon>Arabidopsis</taxon>
    </lineage>
</organism>
<proteinExistence type="evidence at protein level"/>